<comment type="function">
    <text evidence="1">Phosphorolytic 3'-5' exoribonuclease that plays an important role in tRNA 3'-end maturation. Removes nucleotide residues following the 3'-CCA terminus of tRNAs; can also add nucleotides to the ends of RNA molecules by using nucleoside diphosphates as substrates, but this may not be physiologically important. Probably plays a role in initiation of 16S rRNA degradation (leading to ribosome degradation) during starvation.</text>
</comment>
<comment type="catalytic activity">
    <reaction evidence="1">
        <text>tRNA(n+1) + phosphate = tRNA(n) + a ribonucleoside 5'-diphosphate</text>
        <dbReference type="Rhea" id="RHEA:10628"/>
        <dbReference type="Rhea" id="RHEA-COMP:17343"/>
        <dbReference type="Rhea" id="RHEA-COMP:17344"/>
        <dbReference type="ChEBI" id="CHEBI:43474"/>
        <dbReference type="ChEBI" id="CHEBI:57930"/>
        <dbReference type="ChEBI" id="CHEBI:173114"/>
        <dbReference type="EC" id="2.7.7.56"/>
    </reaction>
</comment>
<comment type="subunit">
    <text evidence="1">Homohexameric ring arranged as a trimer of dimers.</text>
</comment>
<comment type="similarity">
    <text evidence="1">Belongs to the RNase PH family.</text>
</comment>
<protein>
    <recommendedName>
        <fullName evidence="1">Ribonuclease PH</fullName>
        <shortName evidence="1">RNase PH</shortName>
        <ecNumber evidence="1">2.7.7.56</ecNumber>
    </recommendedName>
    <alternativeName>
        <fullName evidence="1">tRNA nucleotidyltransferase</fullName>
    </alternativeName>
</protein>
<reference key="1">
    <citation type="submission" date="2006-01" db="EMBL/GenBank/DDBJ databases">
        <title>Complete sequence of Rhodopseudomonas palustris HaA2.</title>
        <authorList>
            <consortium name="US DOE Joint Genome Institute"/>
            <person name="Copeland A."/>
            <person name="Lucas S."/>
            <person name="Lapidus A."/>
            <person name="Barry K."/>
            <person name="Detter J.C."/>
            <person name="Glavina T."/>
            <person name="Hammon N."/>
            <person name="Israni S."/>
            <person name="Pitluck S."/>
            <person name="Chain P."/>
            <person name="Malfatti S."/>
            <person name="Shin M."/>
            <person name="Vergez L."/>
            <person name="Schmutz J."/>
            <person name="Larimer F."/>
            <person name="Land M."/>
            <person name="Hauser L."/>
            <person name="Pelletier D.A."/>
            <person name="Kyrpides N."/>
            <person name="Anderson I."/>
            <person name="Oda Y."/>
            <person name="Harwood C.S."/>
            <person name="Richardson P."/>
        </authorList>
    </citation>
    <scope>NUCLEOTIDE SEQUENCE [LARGE SCALE GENOMIC DNA]</scope>
    <source>
        <strain>HaA2</strain>
    </source>
</reference>
<proteinExistence type="inferred from homology"/>
<sequence>MRPSRRAPDELRAVSLERGVVKYAEGSCLVKFGDTHVLVTATLEERLPPWLKGQGRGWVTAEYGMLPRATLERTRREAAAGKQNGRTVEIQRLIGRSLRTIVDLQALGERQITVDCDVLQADGGTRTASITGAWVALADCLAWMKTRNMLKGQVMRDNVAAISCGIYNGTPVLDLDYAEDSEAETDANFVMTGDGRIVEVQGTAEKTPFSQDEFLALMALAQKGVARLVDLQKMAVA</sequence>
<dbReference type="EC" id="2.7.7.56" evidence="1"/>
<dbReference type="EMBL" id="CP000250">
    <property type="protein sequence ID" value="ABD05136.1"/>
    <property type="molecule type" value="Genomic_DNA"/>
</dbReference>
<dbReference type="RefSeq" id="WP_011439326.1">
    <property type="nucleotide sequence ID" value="NC_007778.1"/>
</dbReference>
<dbReference type="SMR" id="Q2J324"/>
<dbReference type="STRING" id="316058.RPB_0425"/>
<dbReference type="KEGG" id="rpb:RPB_0425"/>
<dbReference type="eggNOG" id="COG0689">
    <property type="taxonomic scope" value="Bacteria"/>
</dbReference>
<dbReference type="HOGENOM" id="CLU_050858_0_0_5"/>
<dbReference type="OrthoDB" id="9802265at2"/>
<dbReference type="Proteomes" id="UP000008809">
    <property type="component" value="Chromosome"/>
</dbReference>
<dbReference type="GO" id="GO:0000175">
    <property type="term" value="F:3'-5'-RNA exonuclease activity"/>
    <property type="evidence" value="ECO:0007669"/>
    <property type="project" value="UniProtKB-UniRule"/>
</dbReference>
<dbReference type="GO" id="GO:0000049">
    <property type="term" value="F:tRNA binding"/>
    <property type="evidence" value="ECO:0007669"/>
    <property type="project" value="UniProtKB-UniRule"/>
</dbReference>
<dbReference type="GO" id="GO:0009022">
    <property type="term" value="F:tRNA nucleotidyltransferase activity"/>
    <property type="evidence" value="ECO:0007669"/>
    <property type="project" value="UniProtKB-UniRule"/>
</dbReference>
<dbReference type="GO" id="GO:0016075">
    <property type="term" value="P:rRNA catabolic process"/>
    <property type="evidence" value="ECO:0007669"/>
    <property type="project" value="UniProtKB-UniRule"/>
</dbReference>
<dbReference type="GO" id="GO:0006364">
    <property type="term" value="P:rRNA processing"/>
    <property type="evidence" value="ECO:0007669"/>
    <property type="project" value="UniProtKB-KW"/>
</dbReference>
<dbReference type="GO" id="GO:0008033">
    <property type="term" value="P:tRNA processing"/>
    <property type="evidence" value="ECO:0007669"/>
    <property type="project" value="UniProtKB-UniRule"/>
</dbReference>
<dbReference type="CDD" id="cd11362">
    <property type="entry name" value="RNase_PH_bact"/>
    <property type="match status" value="1"/>
</dbReference>
<dbReference type="FunFam" id="3.30.230.70:FF:000003">
    <property type="entry name" value="Ribonuclease PH"/>
    <property type="match status" value="1"/>
</dbReference>
<dbReference type="Gene3D" id="3.30.230.70">
    <property type="entry name" value="GHMP Kinase, N-terminal domain"/>
    <property type="match status" value="1"/>
</dbReference>
<dbReference type="HAMAP" id="MF_00564">
    <property type="entry name" value="RNase_PH"/>
    <property type="match status" value="1"/>
</dbReference>
<dbReference type="InterPro" id="IPR001247">
    <property type="entry name" value="ExoRNase_PH_dom1"/>
</dbReference>
<dbReference type="InterPro" id="IPR015847">
    <property type="entry name" value="ExoRNase_PH_dom2"/>
</dbReference>
<dbReference type="InterPro" id="IPR036345">
    <property type="entry name" value="ExoRNase_PH_dom2_sf"/>
</dbReference>
<dbReference type="InterPro" id="IPR027408">
    <property type="entry name" value="PNPase/RNase_PH_dom_sf"/>
</dbReference>
<dbReference type="InterPro" id="IPR020568">
    <property type="entry name" value="Ribosomal_Su5_D2-typ_SF"/>
</dbReference>
<dbReference type="InterPro" id="IPR050080">
    <property type="entry name" value="RNase_PH"/>
</dbReference>
<dbReference type="InterPro" id="IPR002381">
    <property type="entry name" value="RNase_PH_bac-type"/>
</dbReference>
<dbReference type="InterPro" id="IPR018336">
    <property type="entry name" value="RNase_PH_CS"/>
</dbReference>
<dbReference type="NCBIfam" id="TIGR01966">
    <property type="entry name" value="RNasePH"/>
    <property type="match status" value="1"/>
</dbReference>
<dbReference type="PANTHER" id="PTHR11953">
    <property type="entry name" value="EXOSOME COMPLEX COMPONENT"/>
    <property type="match status" value="1"/>
</dbReference>
<dbReference type="PANTHER" id="PTHR11953:SF0">
    <property type="entry name" value="EXOSOME COMPLEX COMPONENT RRP41"/>
    <property type="match status" value="1"/>
</dbReference>
<dbReference type="Pfam" id="PF01138">
    <property type="entry name" value="RNase_PH"/>
    <property type="match status" value="1"/>
</dbReference>
<dbReference type="Pfam" id="PF03725">
    <property type="entry name" value="RNase_PH_C"/>
    <property type="match status" value="1"/>
</dbReference>
<dbReference type="SUPFAM" id="SSF55666">
    <property type="entry name" value="Ribonuclease PH domain 2-like"/>
    <property type="match status" value="1"/>
</dbReference>
<dbReference type="SUPFAM" id="SSF54211">
    <property type="entry name" value="Ribosomal protein S5 domain 2-like"/>
    <property type="match status" value="1"/>
</dbReference>
<dbReference type="PROSITE" id="PS01277">
    <property type="entry name" value="RIBONUCLEASE_PH"/>
    <property type="match status" value="1"/>
</dbReference>
<feature type="chain" id="PRO_1000024863" description="Ribonuclease PH">
    <location>
        <begin position="1"/>
        <end position="237"/>
    </location>
</feature>
<feature type="binding site" evidence="1">
    <location>
        <position position="86"/>
    </location>
    <ligand>
        <name>phosphate</name>
        <dbReference type="ChEBI" id="CHEBI:43474"/>
        <note>substrate</note>
    </ligand>
</feature>
<feature type="binding site" evidence="1">
    <location>
        <begin position="124"/>
        <end position="126"/>
    </location>
    <ligand>
        <name>phosphate</name>
        <dbReference type="ChEBI" id="CHEBI:43474"/>
        <note>substrate</note>
    </ligand>
</feature>
<accession>Q2J324</accession>
<keyword id="KW-0548">Nucleotidyltransferase</keyword>
<keyword id="KW-1185">Reference proteome</keyword>
<keyword id="KW-0694">RNA-binding</keyword>
<keyword id="KW-0698">rRNA processing</keyword>
<keyword id="KW-0808">Transferase</keyword>
<keyword id="KW-0819">tRNA processing</keyword>
<keyword id="KW-0820">tRNA-binding</keyword>
<organism>
    <name type="scientific">Rhodopseudomonas palustris (strain HaA2)</name>
    <dbReference type="NCBI Taxonomy" id="316058"/>
    <lineage>
        <taxon>Bacteria</taxon>
        <taxon>Pseudomonadati</taxon>
        <taxon>Pseudomonadota</taxon>
        <taxon>Alphaproteobacteria</taxon>
        <taxon>Hyphomicrobiales</taxon>
        <taxon>Nitrobacteraceae</taxon>
        <taxon>Rhodopseudomonas</taxon>
    </lineage>
</organism>
<gene>
    <name evidence="1" type="primary">rph</name>
    <name type="ordered locus">RPB_0425</name>
</gene>
<name>RNPH_RHOP2</name>
<evidence type="ECO:0000255" key="1">
    <source>
        <dbReference type="HAMAP-Rule" id="MF_00564"/>
    </source>
</evidence>